<feature type="chain" id="PRO_0000283028" description="Beta-galactosidase-1-like protein 3">
    <location>
        <begin position="1"/>
        <end position="653"/>
    </location>
</feature>
<feature type="active site" description="Proton donor" evidence="1">
    <location>
        <position position="227"/>
    </location>
</feature>
<feature type="active site" description="Nucleophile" evidence="1">
    <location>
        <position position="301"/>
    </location>
</feature>
<feature type="splice variant" id="VSP_024280" description="In isoform 2." evidence="4">
    <location>
        <begin position="1"/>
        <end position="339"/>
    </location>
</feature>
<feature type="splice variant" id="VSP_024283" description="In isoform 4." evidence="5">
    <original>RDKPLLIMEYWVGWFDRWGDK</original>
    <variation>GASIDAGLLSDASQAATSSSL</variation>
    <location>
        <begin position="293"/>
        <end position="313"/>
    </location>
</feature>
<feature type="splice variant" id="VSP_024284" description="In isoform 4." evidence="5">
    <location>
        <begin position="314"/>
        <end position="653"/>
    </location>
</feature>
<feature type="sequence variant" id="VAR_031477" description="In dbSNP:rs472287." evidence="3">
    <original>R</original>
    <variation>P</variation>
    <location>
        <position position="163"/>
    </location>
</feature>
<feature type="sequence variant" id="VAR_031478" description="In dbSNP:rs2509062." evidence="2">
    <original>V</original>
    <variation>M</variation>
    <location>
        <position position="474"/>
    </location>
</feature>
<accession>Q8NCI6</accession>
<accession>A6NEM0</accession>
<accession>A6NN15</accession>
<accession>Q6P3S3</accession>
<accession>Q96FF8</accession>
<reference key="1">
    <citation type="journal article" date="2004" name="Nat. Genet.">
        <title>Complete sequencing and characterization of 21,243 full-length human cDNAs.</title>
        <authorList>
            <person name="Ota T."/>
            <person name="Suzuki Y."/>
            <person name="Nishikawa T."/>
            <person name="Otsuki T."/>
            <person name="Sugiyama T."/>
            <person name="Irie R."/>
            <person name="Wakamatsu A."/>
            <person name="Hayashi K."/>
            <person name="Sato H."/>
            <person name="Nagai K."/>
            <person name="Kimura K."/>
            <person name="Makita H."/>
            <person name="Sekine M."/>
            <person name="Obayashi M."/>
            <person name="Nishi T."/>
            <person name="Shibahara T."/>
            <person name="Tanaka T."/>
            <person name="Ishii S."/>
            <person name="Yamamoto J."/>
            <person name="Saito K."/>
            <person name="Kawai Y."/>
            <person name="Isono Y."/>
            <person name="Nakamura Y."/>
            <person name="Nagahari K."/>
            <person name="Murakami K."/>
            <person name="Yasuda T."/>
            <person name="Iwayanagi T."/>
            <person name="Wagatsuma M."/>
            <person name="Shiratori A."/>
            <person name="Sudo H."/>
            <person name="Hosoiri T."/>
            <person name="Kaku Y."/>
            <person name="Kodaira H."/>
            <person name="Kondo H."/>
            <person name="Sugawara M."/>
            <person name="Takahashi M."/>
            <person name="Kanda K."/>
            <person name="Yokoi T."/>
            <person name="Furuya T."/>
            <person name="Kikkawa E."/>
            <person name="Omura Y."/>
            <person name="Abe K."/>
            <person name="Kamihara K."/>
            <person name="Katsuta N."/>
            <person name="Sato K."/>
            <person name="Tanikawa M."/>
            <person name="Yamazaki M."/>
            <person name="Ninomiya K."/>
            <person name="Ishibashi T."/>
            <person name="Yamashita H."/>
            <person name="Murakawa K."/>
            <person name="Fujimori K."/>
            <person name="Tanai H."/>
            <person name="Kimata M."/>
            <person name="Watanabe M."/>
            <person name="Hiraoka S."/>
            <person name="Chiba Y."/>
            <person name="Ishida S."/>
            <person name="Ono Y."/>
            <person name="Takiguchi S."/>
            <person name="Watanabe S."/>
            <person name="Yosida M."/>
            <person name="Hotuta T."/>
            <person name="Kusano J."/>
            <person name="Kanehori K."/>
            <person name="Takahashi-Fujii A."/>
            <person name="Hara H."/>
            <person name="Tanase T.-O."/>
            <person name="Nomura Y."/>
            <person name="Togiya S."/>
            <person name="Komai F."/>
            <person name="Hara R."/>
            <person name="Takeuchi K."/>
            <person name="Arita M."/>
            <person name="Imose N."/>
            <person name="Musashino K."/>
            <person name="Yuuki H."/>
            <person name="Oshima A."/>
            <person name="Sasaki N."/>
            <person name="Aotsuka S."/>
            <person name="Yoshikawa Y."/>
            <person name="Matsunawa H."/>
            <person name="Ichihara T."/>
            <person name="Shiohata N."/>
            <person name="Sano S."/>
            <person name="Moriya S."/>
            <person name="Momiyama H."/>
            <person name="Satoh N."/>
            <person name="Takami S."/>
            <person name="Terashima Y."/>
            <person name="Suzuki O."/>
            <person name="Nakagawa S."/>
            <person name="Senoh A."/>
            <person name="Mizoguchi H."/>
            <person name="Goto Y."/>
            <person name="Shimizu F."/>
            <person name="Wakebe H."/>
            <person name="Hishigaki H."/>
            <person name="Watanabe T."/>
            <person name="Sugiyama A."/>
            <person name="Takemoto M."/>
            <person name="Kawakami B."/>
            <person name="Yamazaki M."/>
            <person name="Watanabe K."/>
            <person name="Kumagai A."/>
            <person name="Itakura S."/>
            <person name="Fukuzumi Y."/>
            <person name="Fujimori Y."/>
            <person name="Komiyama M."/>
            <person name="Tashiro H."/>
            <person name="Tanigami A."/>
            <person name="Fujiwara T."/>
            <person name="Ono T."/>
            <person name="Yamada K."/>
            <person name="Fujii Y."/>
            <person name="Ozaki K."/>
            <person name="Hirao M."/>
            <person name="Ohmori Y."/>
            <person name="Kawabata A."/>
            <person name="Hikiji T."/>
            <person name="Kobatake N."/>
            <person name="Inagaki H."/>
            <person name="Ikema Y."/>
            <person name="Okamoto S."/>
            <person name="Okitani R."/>
            <person name="Kawakami T."/>
            <person name="Noguchi S."/>
            <person name="Itoh T."/>
            <person name="Shigeta K."/>
            <person name="Senba T."/>
            <person name="Matsumura K."/>
            <person name="Nakajima Y."/>
            <person name="Mizuno T."/>
            <person name="Morinaga M."/>
            <person name="Sasaki M."/>
            <person name="Togashi T."/>
            <person name="Oyama M."/>
            <person name="Hata H."/>
            <person name="Watanabe M."/>
            <person name="Komatsu T."/>
            <person name="Mizushima-Sugano J."/>
            <person name="Satoh T."/>
            <person name="Shirai Y."/>
            <person name="Takahashi Y."/>
            <person name="Nakagawa K."/>
            <person name="Okumura K."/>
            <person name="Nagase T."/>
            <person name="Nomura N."/>
            <person name="Kikuchi H."/>
            <person name="Masuho Y."/>
            <person name="Yamashita R."/>
            <person name="Nakai K."/>
            <person name="Yada T."/>
            <person name="Nakamura Y."/>
            <person name="Ohara O."/>
            <person name="Isogai T."/>
            <person name="Sugano S."/>
        </authorList>
    </citation>
    <scope>NUCLEOTIDE SEQUENCE [LARGE SCALE MRNA] (ISOFORM 2)</scope>
    <scope>VARIANT MET-474</scope>
</reference>
<reference key="2">
    <citation type="journal article" date="2006" name="Nature">
        <title>Human chromosome 11 DNA sequence and analysis including novel gene identification.</title>
        <authorList>
            <person name="Taylor T.D."/>
            <person name="Noguchi H."/>
            <person name="Totoki Y."/>
            <person name="Toyoda A."/>
            <person name="Kuroki Y."/>
            <person name="Dewar K."/>
            <person name="Lloyd C."/>
            <person name="Itoh T."/>
            <person name="Takeda T."/>
            <person name="Kim D.-W."/>
            <person name="She X."/>
            <person name="Barlow K.F."/>
            <person name="Bloom T."/>
            <person name="Bruford E."/>
            <person name="Chang J.L."/>
            <person name="Cuomo C.A."/>
            <person name="Eichler E."/>
            <person name="FitzGerald M.G."/>
            <person name="Jaffe D.B."/>
            <person name="LaButti K."/>
            <person name="Nicol R."/>
            <person name="Park H.-S."/>
            <person name="Seaman C."/>
            <person name="Sougnez C."/>
            <person name="Yang X."/>
            <person name="Zimmer A.R."/>
            <person name="Zody M.C."/>
            <person name="Birren B.W."/>
            <person name="Nusbaum C."/>
            <person name="Fujiyama A."/>
            <person name="Hattori M."/>
            <person name="Rogers J."/>
            <person name="Lander E.S."/>
            <person name="Sakaki Y."/>
        </authorList>
    </citation>
    <scope>NUCLEOTIDE SEQUENCE [LARGE SCALE GENOMIC DNA]</scope>
</reference>
<reference key="3">
    <citation type="journal article" date="2004" name="Genome Res.">
        <title>The status, quality, and expansion of the NIH full-length cDNA project: the Mammalian Gene Collection (MGC).</title>
        <authorList>
            <consortium name="The MGC Project Team"/>
        </authorList>
    </citation>
    <scope>NUCLEOTIDE SEQUENCE [LARGE SCALE MRNA] (ISOFORM 4)</scope>
    <scope>VARIANT PRO-163</scope>
    <source>
        <tissue>Lung</tissue>
    </source>
</reference>
<keyword id="KW-0025">Alternative splicing</keyword>
<keyword id="KW-0326">Glycosidase</keyword>
<keyword id="KW-0378">Hydrolase</keyword>
<keyword id="KW-1267">Proteomics identification</keyword>
<keyword id="KW-1185">Reference proteome</keyword>
<organism>
    <name type="scientific">Homo sapiens</name>
    <name type="common">Human</name>
    <dbReference type="NCBI Taxonomy" id="9606"/>
    <lineage>
        <taxon>Eukaryota</taxon>
        <taxon>Metazoa</taxon>
        <taxon>Chordata</taxon>
        <taxon>Craniata</taxon>
        <taxon>Vertebrata</taxon>
        <taxon>Euteleostomi</taxon>
        <taxon>Mammalia</taxon>
        <taxon>Eutheria</taxon>
        <taxon>Euarchontoglires</taxon>
        <taxon>Primates</taxon>
        <taxon>Haplorrhini</taxon>
        <taxon>Catarrhini</taxon>
        <taxon>Hominidae</taxon>
        <taxon>Homo</taxon>
    </lineage>
</organism>
<sequence>MKSPPLLSPCLSWKRMAGIFFLPFISSGFAPRFKQEENFMLGRAHPSQPRFNWSHLTPLELKNRSVGLGTESTGRGKPHFTLEGHKFLIFGGSIHYFRVPREYWRDRLLKLKACGFNTVTTYVPWNLHEPERGKFDFSGNLDLEAFVLMAAEIGLWVILRPGRYICSEMDLGGLPSWLLQDPRLLLRTTNKSFIEAVEKYFDHLIPRVIPLQYRQAGPVIAVQVENEYGSFNKDKTYMPYLHKALLRRGIVELLLTSDGEKHVLSGHTKGVLAAINLQKLHQDTFNQLHKVQRDKPLLIMEYWVGWFDRWGDKHHVKDAKEVEHAVSEFIKYEISFNVYMFHGGTNFGFMNGATYFGKHSGIVTSYDYDAVLTEAGDYTEKYLKLQKLFQSVSATPLPRVPKLPPKAVYPPVRPSLYLPLWDALSYLNEPVRSRQPVNMENLPINNGSGQSYGLVLYEKSICSGGRLRAHAHDVAQVFLDETMIGILNENNKDLHIPELRDCRYLRILVENQGRVNFSWQIQNEQKGITGSVSINNSSLEGFTIYSLEMKMSFFERLRSATWKPVPDSHQGPAFYCGTLKAGPSPKDTFLSLLNWNYGFVFINGRNLGRYWNIGPQKTLYLPGVWLHPEDNEVILFEKMMSGSDIKSTDKPTL</sequence>
<evidence type="ECO:0000250" key="1"/>
<evidence type="ECO:0000269" key="2">
    <source>
    </source>
</evidence>
<evidence type="ECO:0000269" key="3">
    <source>
    </source>
</evidence>
<evidence type="ECO:0000303" key="4">
    <source>
    </source>
</evidence>
<evidence type="ECO:0000303" key="5">
    <source>
    </source>
</evidence>
<evidence type="ECO:0000305" key="6"/>
<proteinExistence type="evidence at protein level"/>
<comment type="alternative products">
    <event type="alternative splicing"/>
    <isoform>
        <id>Q8NCI6-1</id>
        <name>1</name>
        <sequence type="displayed"/>
    </isoform>
    <isoform>
        <id>Q8NCI6-2</id>
        <name>2</name>
        <sequence type="described" ref="VSP_024280"/>
    </isoform>
    <isoform>
        <id>Q8NCI6-4</id>
        <name>4</name>
        <sequence type="described" ref="VSP_024283 VSP_024284"/>
    </isoform>
</comment>
<comment type="similarity">
    <text evidence="6">Belongs to the glycosyl hydrolase 35 family.</text>
</comment>
<gene>
    <name type="primary">GLB1L3</name>
</gene>
<protein>
    <recommendedName>
        <fullName>Beta-galactosidase-1-like protein 3</fullName>
        <ecNumber>3.2.1.-</ecNumber>
    </recommendedName>
</protein>
<name>GLBL3_HUMAN</name>
<dbReference type="EC" id="3.2.1.-"/>
<dbReference type="EMBL" id="AK074712">
    <property type="protein sequence ID" value="BAC11155.1"/>
    <property type="molecule type" value="mRNA"/>
</dbReference>
<dbReference type="EMBL" id="AP000859">
    <property type="status" value="NOT_ANNOTATED_CDS"/>
    <property type="molecule type" value="Genomic_DNA"/>
</dbReference>
<dbReference type="EMBL" id="BC011001">
    <property type="protein sequence ID" value="AAH11001.2"/>
    <property type="molecule type" value="mRNA"/>
</dbReference>
<dbReference type="CCDS" id="CCDS44780.1">
    <molecule id="Q8NCI6-1"/>
</dbReference>
<dbReference type="RefSeq" id="NP_001073876.2">
    <molecule id="Q8NCI6-1"/>
    <property type="nucleotide sequence ID" value="NM_001080407.3"/>
</dbReference>
<dbReference type="SMR" id="Q8NCI6"/>
<dbReference type="BioGRID" id="125216">
    <property type="interactions" value="9"/>
</dbReference>
<dbReference type="FunCoup" id="Q8NCI6">
    <property type="interactions" value="116"/>
</dbReference>
<dbReference type="IntAct" id="Q8NCI6">
    <property type="interactions" value="5"/>
</dbReference>
<dbReference type="STRING" id="9606.ENSP00000396615"/>
<dbReference type="CAZy" id="GH35">
    <property type="family name" value="Glycoside Hydrolase Family 35"/>
</dbReference>
<dbReference type="GlyGen" id="Q8NCI6">
    <property type="glycosylation" value="1 site, 1 O-linked glycan (1 site)"/>
</dbReference>
<dbReference type="iPTMnet" id="Q8NCI6"/>
<dbReference type="PhosphoSitePlus" id="Q8NCI6"/>
<dbReference type="BioMuta" id="GLB1L3"/>
<dbReference type="DMDM" id="269849685"/>
<dbReference type="jPOST" id="Q8NCI6"/>
<dbReference type="MassIVE" id="Q8NCI6"/>
<dbReference type="PaxDb" id="9606-ENSP00000396615"/>
<dbReference type="PeptideAtlas" id="Q8NCI6"/>
<dbReference type="ProteomicsDB" id="72897">
    <molecule id="Q8NCI6-1"/>
</dbReference>
<dbReference type="ProteomicsDB" id="72898">
    <molecule id="Q8NCI6-2"/>
</dbReference>
<dbReference type="ProteomicsDB" id="72899">
    <molecule id="Q8NCI6-4"/>
</dbReference>
<dbReference type="Antibodypedia" id="33186">
    <property type="antibodies" value="130 antibodies from 22 providers"/>
</dbReference>
<dbReference type="DNASU" id="112937"/>
<dbReference type="Ensembl" id="ENST00000389887.9">
    <molecule id="Q8NCI6-4"/>
    <property type="protein sequence ID" value="ENSP00000374537.5"/>
    <property type="gene ID" value="ENSG00000166105.16"/>
</dbReference>
<dbReference type="Ensembl" id="ENST00000431683.7">
    <molecule id="Q8NCI6-1"/>
    <property type="protein sequence ID" value="ENSP00000396615.2"/>
    <property type="gene ID" value="ENSG00000166105.16"/>
</dbReference>
<dbReference type="GeneID" id="112937"/>
<dbReference type="KEGG" id="hsa:112937"/>
<dbReference type="MANE-Select" id="ENST00000431683.7">
    <property type="protein sequence ID" value="ENSP00000396615.2"/>
    <property type="RefSeq nucleotide sequence ID" value="NM_001080407.3"/>
    <property type="RefSeq protein sequence ID" value="NP_001073876.2"/>
</dbReference>
<dbReference type="UCSC" id="uc009zdf.4">
    <molecule id="Q8NCI6-1"/>
    <property type="organism name" value="human"/>
</dbReference>
<dbReference type="AGR" id="HGNC:25147"/>
<dbReference type="CTD" id="112937"/>
<dbReference type="DisGeNET" id="112937"/>
<dbReference type="GeneCards" id="GLB1L3"/>
<dbReference type="HGNC" id="HGNC:25147">
    <property type="gene designation" value="GLB1L3"/>
</dbReference>
<dbReference type="HPA" id="ENSG00000166105">
    <property type="expression patterns" value="Tissue enhanced (brain, prostate, seminal vesicle)"/>
</dbReference>
<dbReference type="neXtProt" id="NX_Q8NCI6"/>
<dbReference type="OpenTargets" id="ENSG00000166105"/>
<dbReference type="PharmGKB" id="PA145148764"/>
<dbReference type="VEuPathDB" id="HostDB:ENSG00000166105"/>
<dbReference type="eggNOG" id="KOG0496">
    <property type="taxonomic scope" value="Eukaryota"/>
</dbReference>
<dbReference type="GeneTree" id="ENSGT00950000182942"/>
<dbReference type="HOGENOM" id="CLU_985336_0_0_1"/>
<dbReference type="InParanoid" id="Q8NCI6"/>
<dbReference type="OMA" id="KDYMPYV"/>
<dbReference type="OrthoDB" id="1657402at2759"/>
<dbReference type="PAN-GO" id="Q8NCI6">
    <property type="GO annotations" value="2 GO annotations based on evolutionary models"/>
</dbReference>
<dbReference type="PhylomeDB" id="Q8NCI6"/>
<dbReference type="TreeFam" id="TF354299"/>
<dbReference type="PathwayCommons" id="Q8NCI6"/>
<dbReference type="Reactome" id="R-HSA-2022857">
    <property type="pathway name" value="Keratan sulfate degradation"/>
</dbReference>
<dbReference type="Reactome" id="R-HSA-2024096">
    <property type="pathway name" value="HS-GAG degradation"/>
</dbReference>
<dbReference type="Reactome" id="R-HSA-9840310">
    <property type="pathway name" value="Glycosphingolipid catabolism"/>
</dbReference>
<dbReference type="SignaLink" id="Q8NCI6"/>
<dbReference type="BioGRID-ORCS" id="112937">
    <property type="hits" value="11 hits in 1137 CRISPR screens"/>
</dbReference>
<dbReference type="ChiTaRS" id="GLB1L3">
    <property type="organism name" value="human"/>
</dbReference>
<dbReference type="GeneWiki" id="GLB1L3"/>
<dbReference type="GenomeRNAi" id="112937"/>
<dbReference type="Pharos" id="Q8NCI6">
    <property type="development level" value="Tdark"/>
</dbReference>
<dbReference type="PRO" id="PR:Q8NCI6"/>
<dbReference type="Proteomes" id="UP000005640">
    <property type="component" value="Chromosome 11"/>
</dbReference>
<dbReference type="RNAct" id="Q8NCI6">
    <property type="molecule type" value="protein"/>
</dbReference>
<dbReference type="Bgee" id="ENSG00000166105">
    <property type="expression patterns" value="Expressed in male germ line stem cell (sensu Vertebrata) in testis and 112 other cell types or tissues"/>
</dbReference>
<dbReference type="ExpressionAtlas" id="Q8NCI6">
    <property type="expression patterns" value="baseline and differential"/>
</dbReference>
<dbReference type="GO" id="GO:0005773">
    <property type="term" value="C:vacuole"/>
    <property type="evidence" value="ECO:0000318"/>
    <property type="project" value="GO_Central"/>
</dbReference>
<dbReference type="GO" id="GO:0004565">
    <property type="term" value="F:beta-galactosidase activity"/>
    <property type="evidence" value="ECO:0000318"/>
    <property type="project" value="GO_Central"/>
</dbReference>
<dbReference type="GO" id="GO:0019388">
    <property type="term" value="P:galactose catabolic process"/>
    <property type="evidence" value="ECO:0000318"/>
    <property type="project" value="GO_Central"/>
</dbReference>
<dbReference type="FunFam" id="2.60.120.260:FF:000049">
    <property type="entry name" value="Beta-galactosidase"/>
    <property type="match status" value="1"/>
</dbReference>
<dbReference type="FunFam" id="3.20.20.80:FF:000036">
    <property type="entry name" value="Beta-galactosidase"/>
    <property type="match status" value="1"/>
</dbReference>
<dbReference type="Gene3D" id="2.60.120.260">
    <property type="entry name" value="Galactose-binding domain-like"/>
    <property type="match status" value="2"/>
</dbReference>
<dbReference type="Gene3D" id="3.20.20.80">
    <property type="entry name" value="Glycosidases"/>
    <property type="match status" value="1"/>
</dbReference>
<dbReference type="InterPro" id="IPR026283">
    <property type="entry name" value="B-gal_1-like"/>
</dbReference>
<dbReference type="InterPro" id="IPR048912">
    <property type="entry name" value="BetaGal1-like_ABD1"/>
</dbReference>
<dbReference type="InterPro" id="IPR048913">
    <property type="entry name" value="BetaGal_gal-bd"/>
</dbReference>
<dbReference type="InterPro" id="IPR008979">
    <property type="entry name" value="Galactose-bd-like_sf"/>
</dbReference>
<dbReference type="InterPro" id="IPR031330">
    <property type="entry name" value="Gly_Hdrlase_35_cat"/>
</dbReference>
<dbReference type="InterPro" id="IPR001944">
    <property type="entry name" value="Glycoside_Hdrlase_35"/>
</dbReference>
<dbReference type="InterPro" id="IPR017853">
    <property type="entry name" value="Glycoside_hydrolase_SF"/>
</dbReference>
<dbReference type="PANTHER" id="PTHR23421">
    <property type="entry name" value="BETA-GALACTOSIDASE RELATED"/>
    <property type="match status" value="1"/>
</dbReference>
<dbReference type="Pfam" id="PF21317">
    <property type="entry name" value="BetaGal_ABD_1"/>
    <property type="match status" value="1"/>
</dbReference>
<dbReference type="Pfam" id="PF21467">
    <property type="entry name" value="BetaGal_gal-bd"/>
    <property type="match status" value="1"/>
</dbReference>
<dbReference type="Pfam" id="PF01301">
    <property type="entry name" value="Glyco_hydro_35"/>
    <property type="match status" value="1"/>
</dbReference>
<dbReference type="PIRSF" id="PIRSF006336">
    <property type="entry name" value="B-gal"/>
    <property type="match status" value="1"/>
</dbReference>
<dbReference type="PRINTS" id="PR00742">
    <property type="entry name" value="GLHYDRLASE35"/>
</dbReference>
<dbReference type="SUPFAM" id="SSF51445">
    <property type="entry name" value="(Trans)glycosidases"/>
    <property type="match status" value="1"/>
</dbReference>
<dbReference type="SUPFAM" id="SSF49785">
    <property type="entry name" value="Galactose-binding domain-like"/>
    <property type="match status" value="1"/>
</dbReference>